<organism>
    <name type="scientific">Treponema pallidum (strain Nichols)</name>
    <dbReference type="NCBI Taxonomy" id="243276"/>
    <lineage>
        <taxon>Bacteria</taxon>
        <taxon>Pseudomonadati</taxon>
        <taxon>Spirochaetota</taxon>
        <taxon>Spirochaetia</taxon>
        <taxon>Spirochaetales</taxon>
        <taxon>Treponemataceae</taxon>
        <taxon>Treponema</taxon>
    </lineage>
</organism>
<comment type="subcellular location">
    <subcellularLocation>
        <location evidence="2">Cell membrane</location>
        <topology evidence="2">Multi-pass membrane protein</topology>
    </subcellularLocation>
</comment>
<comment type="similarity">
    <text evidence="2">Belongs to the autoinducer-2 exporter (AI-2E) (TC 2.A.86) family.</text>
</comment>
<accession>O83564</accession>
<feature type="chain" id="PRO_0000148324" description="Putative transport protein TP_0553">
    <location>
        <begin position="1"/>
        <end position="403"/>
    </location>
</feature>
<feature type="transmembrane region" description="Helical" evidence="1">
    <location>
        <begin position="10"/>
        <end position="30"/>
    </location>
</feature>
<feature type="transmembrane region" description="Helical" evidence="1">
    <location>
        <begin position="31"/>
        <end position="51"/>
    </location>
</feature>
<feature type="transmembrane region" description="Helical" evidence="1">
    <location>
        <begin position="92"/>
        <end position="112"/>
    </location>
</feature>
<feature type="transmembrane region" description="Helical" evidence="1">
    <location>
        <begin position="202"/>
        <end position="222"/>
    </location>
</feature>
<feature type="transmembrane region" description="Helical" evidence="1">
    <location>
        <begin position="243"/>
        <end position="263"/>
    </location>
</feature>
<feature type="transmembrane region" description="Helical" evidence="1">
    <location>
        <begin position="271"/>
        <end position="291"/>
    </location>
</feature>
<feature type="transmembrane region" description="Helical" evidence="1">
    <location>
        <begin position="293"/>
        <end position="313"/>
    </location>
</feature>
<feature type="transmembrane region" description="Helical" evidence="1">
    <location>
        <begin position="350"/>
        <end position="370"/>
    </location>
</feature>
<evidence type="ECO:0000255" key="1"/>
<evidence type="ECO:0000305" key="2"/>
<dbReference type="EMBL" id="AE000520">
    <property type="protein sequence ID" value="AAC26557.1"/>
    <property type="molecule type" value="Genomic_DNA"/>
</dbReference>
<dbReference type="PIR" id="E71309">
    <property type="entry name" value="E71309"/>
</dbReference>
<dbReference type="RefSeq" id="WP_010882000.1">
    <property type="nucleotide sequence ID" value="NC_021490.2"/>
</dbReference>
<dbReference type="STRING" id="243276.TP_0553"/>
<dbReference type="EnsemblBacteria" id="AAC26557">
    <property type="protein sequence ID" value="AAC26557"/>
    <property type="gene ID" value="TP_0553"/>
</dbReference>
<dbReference type="KEGG" id="tpa:TP_0553"/>
<dbReference type="KEGG" id="tpw:TPANIC_0553"/>
<dbReference type="eggNOG" id="COG0628">
    <property type="taxonomic scope" value="Bacteria"/>
</dbReference>
<dbReference type="HOGENOM" id="CLU_041771_2_3_12"/>
<dbReference type="OrthoDB" id="343317at2"/>
<dbReference type="Proteomes" id="UP000000811">
    <property type="component" value="Chromosome"/>
</dbReference>
<dbReference type="GO" id="GO:0005886">
    <property type="term" value="C:plasma membrane"/>
    <property type="evidence" value="ECO:0007669"/>
    <property type="project" value="UniProtKB-SubCell"/>
</dbReference>
<dbReference type="InterPro" id="IPR002549">
    <property type="entry name" value="AI-2E-like"/>
</dbReference>
<dbReference type="PANTHER" id="PTHR21716">
    <property type="entry name" value="TRANSMEMBRANE PROTEIN"/>
    <property type="match status" value="1"/>
</dbReference>
<dbReference type="PANTHER" id="PTHR21716:SF4">
    <property type="entry name" value="TRANSMEMBRANE PROTEIN 245"/>
    <property type="match status" value="1"/>
</dbReference>
<dbReference type="Pfam" id="PF01594">
    <property type="entry name" value="AI-2E_transport"/>
    <property type="match status" value="1"/>
</dbReference>
<sequence>MEKQSPAQTISLFVLLALMFVLVCMLFVPYLTVLLWSSILAILLSPCYRALCARIDMHAFTRTRHLVSHMNGEDGCTAAITRATRFQKKMLAAVFSLVITLLVTTVFFFIAISLFGQGKLLFDKLSLFFREYDLFEGAKQRSFTALIFKLSRGTVDISTLNVEEHLLRFFGKHVESVFVYTQIFVKNIARAALSTLFFSFTLYFFFLDGEHLSCLLIAALPLRKRASAQLLEKCKEATRHLFKGLFSIAFYQTCVAFVFYGIFRVEGPMALAMLTFFASFLPLVGCACVWLPVGISIGFTSGWMRGTLFLFVAGSSITIIDSFLRPLLLQNKMRIHPLLIFFSMLGGVQTFGFNGMVLGPILVILLFTVIDLTHDGESHYTSIFHDPPAAGVHAQSIHRQGKK</sequence>
<name>Y553_TREPA</name>
<reference key="1">
    <citation type="journal article" date="1998" name="Science">
        <title>Complete genome sequence of Treponema pallidum, the syphilis spirochete.</title>
        <authorList>
            <person name="Fraser C.M."/>
            <person name="Norris S.J."/>
            <person name="Weinstock G.M."/>
            <person name="White O."/>
            <person name="Sutton G.G."/>
            <person name="Dodson R.J."/>
            <person name="Gwinn M.L."/>
            <person name="Hickey E.K."/>
            <person name="Clayton R.A."/>
            <person name="Ketchum K.A."/>
            <person name="Sodergren E."/>
            <person name="Hardham J.M."/>
            <person name="McLeod M.P."/>
            <person name="Salzberg S.L."/>
            <person name="Peterson J.D."/>
            <person name="Khalak H.G."/>
            <person name="Richardson D.L."/>
            <person name="Howell J.K."/>
            <person name="Chidambaram M."/>
            <person name="Utterback T.R."/>
            <person name="McDonald L.A."/>
            <person name="Artiach P."/>
            <person name="Bowman C."/>
            <person name="Cotton M.D."/>
            <person name="Fujii C."/>
            <person name="Garland S.A."/>
            <person name="Hatch B."/>
            <person name="Horst K."/>
            <person name="Roberts K.M."/>
            <person name="Sandusky M."/>
            <person name="Weidman J.F."/>
            <person name="Smith H.O."/>
            <person name="Venter J.C."/>
        </authorList>
    </citation>
    <scope>NUCLEOTIDE SEQUENCE [LARGE SCALE GENOMIC DNA]</scope>
    <source>
        <strain>Nichols</strain>
    </source>
</reference>
<keyword id="KW-1003">Cell membrane</keyword>
<keyword id="KW-0472">Membrane</keyword>
<keyword id="KW-1185">Reference proteome</keyword>
<keyword id="KW-0812">Transmembrane</keyword>
<keyword id="KW-1133">Transmembrane helix</keyword>
<keyword id="KW-0813">Transport</keyword>
<protein>
    <recommendedName>
        <fullName>Putative transport protein TP_0553</fullName>
    </recommendedName>
</protein>
<gene>
    <name type="ordered locus">TP_0553</name>
</gene>
<proteinExistence type="inferred from homology"/>